<name>Y7140_RICRS</name>
<gene>
    <name type="ordered locus">A1G_07140</name>
</gene>
<evidence type="ECO:0000255" key="1">
    <source>
        <dbReference type="HAMAP-Rule" id="MF_00634"/>
    </source>
</evidence>
<protein>
    <recommendedName>
        <fullName evidence="1">UPF0235 protein A1G_07140</fullName>
    </recommendedName>
</protein>
<dbReference type="EMBL" id="CP000848">
    <property type="protein sequence ID" value="ABV76869.1"/>
    <property type="molecule type" value="Genomic_DNA"/>
</dbReference>
<dbReference type="RefSeq" id="WP_012151408.1">
    <property type="nucleotide sequence ID" value="NZ_CP121767.1"/>
</dbReference>
<dbReference type="SMR" id="A8GTZ4"/>
<dbReference type="GeneID" id="79937901"/>
<dbReference type="KEGG" id="rri:A1G_07140"/>
<dbReference type="HOGENOM" id="CLU_130694_6_2_5"/>
<dbReference type="Proteomes" id="UP000006832">
    <property type="component" value="Chromosome"/>
</dbReference>
<dbReference type="GO" id="GO:0005737">
    <property type="term" value="C:cytoplasm"/>
    <property type="evidence" value="ECO:0007669"/>
    <property type="project" value="TreeGrafter"/>
</dbReference>
<dbReference type="Gene3D" id="3.30.1200.10">
    <property type="entry name" value="YggU-like"/>
    <property type="match status" value="1"/>
</dbReference>
<dbReference type="HAMAP" id="MF_00634">
    <property type="entry name" value="UPF0235"/>
    <property type="match status" value="1"/>
</dbReference>
<dbReference type="InterPro" id="IPR003746">
    <property type="entry name" value="DUF167"/>
</dbReference>
<dbReference type="InterPro" id="IPR036591">
    <property type="entry name" value="YggU-like_sf"/>
</dbReference>
<dbReference type="NCBIfam" id="TIGR00251">
    <property type="entry name" value="DUF167 family protein"/>
    <property type="match status" value="1"/>
</dbReference>
<dbReference type="NCBIfam" id="NF002419">
    <property type="entry name" value="PRK01530.1"/>
    <property type="match status" value="1"/>
</dbReference>
<dbReference type="PANTHER" id="PTHR13420">
    <property type="entry name" value="UPF0235 PROTEIN C15ORF40"/>
    <property type="match status" value="1"/>
</dbReference>
<dbReference type="PANTHER" id="PTHR13420:SF7">
    <property type="entry name" value="UPF0235 PROTEIN C15ORF40"/>
    <property type="match status" value="1"/>
</dbReference>
<dbReference type="Pfam" id="PF02594">
    <property type="entry name" value="DUF167"/>
    <property type="match status" value="1"/>
</dbReference>
<dbReference type="SMART" id="SM01152">
    <property type="entry name" value="DUF167"/>
    <property type="match status" value="1"/>
</dbReference>
<dbReference type="SUPFAM" id="SSF69786">
    <property type="entry name" value="YggU-like"/>
    <property type="match status" value="1"/>
</dbReference>
<reference key="1">
    <citation type="submission" date="2007-09" db="EMBL/GenBank/DDBJ databases">
        <title>Complete genome sequence of Rickettsia rickettsii.</title>
        <authorList>
            <person name="Madan A."/>
            <person name="Fahey J."/>
            <person name="Helton E."/>
            <person name="Ketteman M."/>
            <person name="Madan A."/>
            <person name="Rodrigues S."/>
            <person name="Sanchez A."/>
            <person name="Dasch G."/>
            <person name="Eremeeva M."/>
        </authorList>
    </citation>
    <scope>NUCLEOTIDE SEQUENCE [LARGE SCALE GENOMIC DNA]</scope>
    <source>
        <strain>Sheila Smith</strain>
    </source>
</reference>
<sequence>MDKFYNYNSSSHQALLSFKVKPNSKQNLISNFVIINNIQYLKLSIKAIPEQGKANSEIINYLAKEWKLSRSNIEIIKGHTHSLKTILIKNINEDYLNLIINSYIK</sequence>
<comment type="similarity">
    <text evidence="1">Belongs to the UPF0235 family.</text>
</comment>
<organism>
    <name type="scientific">Rickettsia rickettsii (strain Sheila Smith)</name>
    <dbReference type="NCBI Taxonomy" id="392021"/>
    <lineage>
        <taxon>Bacteria</taxon>
        <taxon>Pseudomonadati</taxon>
        <taxon>Pseudomonadota</taxon>
        <taxon>Alphaproteobacteria</taxon>
        <taxon>Rickettsiales</taxon>
        <taxon>Rickettsiaceae</taxon>
        <taxon>Rickettsieae</taxon>
        <taxon>Rickettsia</taxon>
        <taxon>spotted fever group</taxon>
    </lineage>
</organism>
<feature type="chain" id="PRO_1000056785" description="UPF0235 protein A1G_07140">
    <location>
        <begin position="1"/>
        <end position="105"/>
    </location>
</feature>
<accession>A8GTZ4</accession>
<proteinExistence type="inferred from homology"/>